<keyword id="KW-0007">Acetylation</keyword>
<keyword id="KW-0175">Coiled coil</keyword>
<keyword id="KW-0333">Golgi apparatus</keyword>
<keyword id="KW-0472">Membrane</keyword>
<keyword id="KW-0653">Protein transport</keyword>
<keyword id="KW-1185">Reference proteome</keyword>
<keyword id="KW-0812">Transmembrane</keyword>
<keyword id="KW-1133">Transmembrane helix</keyword>
<keyword id="KW-0813">Transport</keyword>
<keyword id="KW-0926">Vacuole</keyword>
<protein>
    <recommendedName>
        <fullName evidence="15">Vesicle transport v-SNARE 11</fullName>
        <shortName evidence="15">AtVTI11</shortName>
    </recommendedName>
    <alternativeName>
        <fullName evidence="17">Protein SHOOT GRAVITROPISM 4</fullName>
    </alternativeName>
    <alternativeName>
        <fullName evidence="14">Vesicle soluble NSF attachment protein receptor VTI1a</fullName>
        <shortName evidence="14">AtVTI1a</shortName>
    </alternativeName>
    <alternativeName>
        <fullName evidence="14">Vesicle transport v-SNARE protein VTI1a</fullName>
    </alternativeName>
</protein>
<reference key="1">
    <citation type="journal article" date="1999" name="Mol. Biol. Cell">
        <title>The plant vesicle-associated SNARE AtVTI1a likely mediates vesicle transport from the trans-Golgi network to the prevacuolar compartment.</title>
        <authorList>
            <person name="Zheng H."/>
            <person name="von Mollard G.F."/>
            <person name="Kovaleva V."/>
            <person name="Stevens T.H."/>
            <person name="Raikhel N.V."/>
        </authorList>
    </citation>
    <scope>NUCLEOTIDE SEQUENCE [MRNA]</scope>
    <scope>INTERACTION WITH SYP21</scope>
    <scope>SUBCELLULAR LOCATION</scope>
    <scope>TISSUE SPECIFICITY</scope>
    <source>
        <strain>cv. Columbia</strain>
    </source>
</reference>
<reference key="2">
    <citation type="journal article" date="1998" name="DNA Res.">
        <title>Structural analysis of Arabidopsis thaliana chromosome 5. IV. Sequence features of the regions of 1,456,315 bp covered by nineteen physically assigned P1 and TAC clones.</title>
        <authorList>
            <person name="Sato S."/>
            <person name="Kaneko T."/>
            <person name="Kotani H."/>
            <person name="Nakamura Y."/>
            <person name="Asamizu E."/>
            <person name="Miyajima N."/>
            <person name="Tabata S."/>
        </authorList>
    </citation>
    <scope>NUCLEOTIDE SEQUENCE [LARGE SCALE GENOMIC DNA]</scope>
    <source>
        <strain>cv. Columbia</strain>
    </source>
</reference>
<reference key="3">
    <citation type="journal article" date="2017" name="Plant J.">
        <title>Araport11: a complete reannotation of the Arabidopsis thaliana reference genome.</title>
        <authorList>
            <person name="Cheng C.Y."/>
            <person name="Krishnakumar V."/>
            <person name="Chan A.P."/>
            <person name="Thibaud-Nissen F."/>
            <person name="Schobel S."/>
            <person name="Town C.D."/>
        </authorList>
    </citation>
    <scope>GENOME REANNOTATION</scope>
    <source>
        <strain>cv. Columbia</strain>
    </source>
</reference>
<reference key="4">
    <citation type="journal article" date="2003" name="Science">
        <title>Empirical analysis of transcriptional activity in the Arabidopsis genome.</title>
        <authorList>
            <person name="Yamada K."/>
            <person name="Lim J."/>
            <person name="Dale J.M."/>
            <person name="Chen H."/>
            <person name="Shinn P."/>
            <person name="Palm C.J."/>
            <person name="Southwick A.M."/>
            <person name="Wu H.C."/>
            <person name="Kim C.J."/>
            <person name="Nguyen M."/>
            <person name="Pham P.K."/>
            <person name="Cheuk R.F."/>
            <person name="Karlin-Newmann G."/>
            <person name="Liu S.X."/>
            <person name="Lam B."/>
            <person name="Sakano H."/>
            <person name="Wu T."/>
            <person name="Yu G."/>
            <person name="Miranda M."/>
            <person name="Quach H.L."/>
            <person name="Tripp M."/>
            <person name="Chang C.H."/>
            <person name="Lee J.M."/>
            <person name="Toriumi M.J."/>
            <person name="Chan M.M."/>
            <person name="Tang C.C."/>
            <person name="Onodera C.S."/>
            <person name="Deng J.M."/>
            <person name="Akiyama K."/>
            <person name="Ansari Y."/>
            <person name="Arakawa T."/>
            <person name="Banh J."/>
            <person name="Banno F."/>
            <person name="Bowser L."/>
            <person name="Brooks S.Y."/>
            <person name="Carninci P."/>
            <person name="Chao Q."/>
            <person name="Choy N."/>
            <person name="Enju A."/>
            <person name="Goldsmith A.D."/>
            <person name="Gurjal M."/>
            <person name="Hansen N.F."/>
            <person name="Hayashizaki Y."/>
            <person name="Johnson-Hopson C."/>
            <person name="Hsuan V.W."/>
            <person name="Iida K."/>
            <person name="Karnes M."/>
            <person name="Khan S."/>
            <person name="Koesema E."/>
            <person name="Ishida J."/>
            <person name="Jiang P.X."/>
            <person name="Jones T."/>
            <person name="Kawai J."/>
            <person name="Kamiya A."/>
            <person name="Meyers C."/>
            <person name="Nakajima M."/>
            <person name="Narusaka M."/>
            <person name="Seki M."/>
            <person name="Sakurai T."/>
            <person name="Satou M."/>
            <person name="Tamse R."/>
            <person name="Vaysberg M."/>
            <person name="Wallender E.K."/>
            <person name="Wong C."/>
            <person name="Yamamura Y."/>
            <person name="Yuan S."/>
            <person name="Shinozaki K."/>
            <person name="Davis R.W."/>
            <person name="Theologis A."/>
            <person name="Ecker J.R."/>
        </authorList>
    </citation>
    <scope>NUCLEOTIDE SEQUENCE [LARGE SCALE MRNA]</scope>
    <source>
        <strain>cv. Columbia</strain>
    </source>
</reference>
<reference key="5">
    <citation type="journal article" date="1997" name="Plant Cell Physiol.">
        <title>Mutations in the SGR4, SGR5 and SGR6 loci of Arabidopsis thaliana alter the shoot gravitropism.</title>
        <authorList>
            <person name="Yamauchi Y."/>
            <person name="Fukaki H."/>
            <person name="Fujisawa H."/>
            <person name="Tasaka M."/>
        </authorList>
    </citation>
    <scope>FUNCTION</scope>
    <scope>DISRUPTION PHENOTYPE</scope>
    <source>
        <strain>cv. Columbia</strain>
    </source>
</reference>
<reference key="6">
    <citation type="journal article" date="2001" name="Mol. Biol. Cell">
        <title>Interactions between syntaxins identify at least five SNARE complexes within the Golgi/prevacuolar system of the Arabidopsis cell.</title>
        <authorList>
            <person name="Sanderfoot A.A."/>
            <person name="Kovaleva V."/>
            <person name="Bassham D.C."/>
            <person name="Raikhel N.V."/>
        </authorList>
    </citation>
    <scope>INTERACTION WITH SYP21; SYP22; SYP51 AND SYP61</scope>
</reference>
<reference key="7">
    <citation type="journal article" date="2002" name="Plant Cell">
        <title>SGR2, a phospholipase-like protein, and ZIG/SGR4, a SNARE, are involved in the shoot gravitropism of Arabidopsis.</title>
        <authorList>
            <person name="Kato T."/>
            <person name="Morita M.T."/>
            <person name="Fukaki H."/>
            <person name="Yamauchi Y."/>
            <person name="Uehara M."/>
            <person name="Niihama M."/>
            <person name="Tasaka M."/>
        </authorList>
    </citation>
    <scope>FUNCTION</scope>
    <scope>DISRUPTION PHENOTYPE</scope>
    <scope>MUTAGENESIS OF GLY-151</scope>
    <source>
        <strain>cv. Columbia</strain>
    </source>
</reference>
<reference key="8">
    <citation type="journal article" date="2002" name="Plant Cell">
        <title>Involvement of the vacuoles of the endodermis in the early process of shoot gravitropism in Arabidopsis.</title>
        <authorList>
            <person name="Morita M.T."/>
            <person name="Kato T."/>
            <person name="Nagafusa K."/>
            <person name="Saito C."/>
            <person name="Ueda T."/>
            <person name="Nakano A."/>
            <person name="Tasaka M."/>
        </authorList>
    </citation>
    <scope>FUNCTION</scope>
    <scope>DISRUPTION PHENOTYPE</scope>
</reference>
<reference key="9">
    <citation type="journal article" date="2004" name="Cell Struct. Funct.">
        <title>Systematic analysis of SNARE molecules in Arabidopsis: dissection of the post-Golgi network in plant cells.</title>
        <authorList>
            <person name="Uemura T."/>
            <person name="Ueda T."/>
            <person name="Ohniwa R.L."/>
            <person name="Nakano A."/>
            <person name="Takeyasu K."/>
            <person name="Sato M.H."/>
        </authorList>
    </citation>
    <scope>SUBCELLULAR LOCATION</scope>
    <scope>TISSUE SPECIFICITY</scope>
</reference>
<reference key="10">
    <citation type="journal article" date="2005" name="Curr. Biol.">
        <title>Conversion of functional specificity in Qb-SNARE VTI1 homologues of Arabidopsis.</title>
        <authorList>
            <person name="Niihama M."/>
            <person name="Uemura T."/>
            <person name="Saito C."/>
            <person name="Nakano A."/>
            <person name="Sato M.H."/>
            <person name="Tasaka M."/>
            <person name="Morita M.T."/>
        </authorList>
    </citation>
    <scope>DISRUPTION PHENOTYPE</scope>
    <scope>SUBCELLULAR LOCATION</scope>
    <source>
        <strain>cv. Columbia</strain>
    </source>
</reference>
<reference key="11">
    <citation type="journal article" date="2006" name="Plant Cell">
        <title>Arabidopsis EPSIN1 plays an important role in vacuolar trafficking of soluble cargo proteins in plant cells via interactions with clathrin, AP-1, VTI11, and VSR1.</title>
        <authorList>
            <person name="Song J."/>
            <person name="Lee M.H."/>
            <person name="Lee G.-J."/>
            <person name="Yoo C.M."/>
            <person name="Hwang I."/>
        </authorList>
    </citation>
    <scope>INTERACTION WITH EPSIN1</scope>
</reference>
<reference key="12">
    <citation type="journal article" date="2007" name="Mol. Cell. Proteomics">
        <title>A proteomics dissection of Arabidopsis thaliana vacuoles isolated from cell culture.</title>
        <authorList>
            <person name="Jaquinod M."/>
            <person name="Villiers F."/>
            <person name="Kieffer-Jaquinod S."/>
            <person name="Hugouvieux V."/>
            <person name="Bruley C."/>
            <person name="Garin J."/>
            <person name="Bourguignon J."/>
        </authorList>
    </citation>
    <scope>IDENTIFICATION BY MASS SPECTROMETRY</scope>
    <scope>SUBCELLULAR LOCATION [LARGE SCALE ANALYSIS]</scope>
</reference>
<reference key="13">
    <citation type="journal article" date="2007" name="Proc. Natl. Acad. Sci. U.S.A.">
        <title>Divergent functions of VTI12 and VTI11 in trafficking to storage and lytic vacuoles in Arabidopsis.</title>
        <authorList>
            <person name="Sanmartin M."/>
            <person name="Ordonez A."/>
            <person name="Sohn E.J."/>
            <person name="Robert S."/>
            <person name="Sanchez-Serrano J.J."/>
            <person name="Surpin M.A."/>
            <person name="Raikhel N.V."/>
            <person name="Rojo E."/>
        </authorList>
    </citation>
    <scope>FUNCTION</scope>
    <scope>DISRUPTION PHENOTYPE</scope>
    <source>
        <strain>cv. Columbia</strain>
    </source>
</reference>
<reference key="14">
    <citation type="journal article" date="2011" name="Plant J.">
        <title>The occurrence of 'bulbs', a complex configuration of the vacuolar membrane, is affected by mutations of vacuolar SNARE and phospholipase in Arabidopsis.</title>
        <authorList>
            <person name="Saito C."/>
            <person name="Uemura T."/>
            <person name="Awai C."/>
            <person name="Tominaga M."/>
            <person name="Ebine K."/>
            <person name="Ito J."/>
            <person name="Ueda T."/>
            <person name="Abe H."/>
            <person name="Morita M.T."/>
            <person name="Tasaka M."/>
            <person name="Nakano A."/>
        </authorList>
    </citation>
    <scope>FUNCTION</scope>
    <scope>DISRUPTION PHENOTYPE</scope>
    <source>
        <strain>cv. Columbia</strain>
    </source>
</reference>
<reference key="15">
    <citation type="journal article" date="2012" name="Mol. Cell. Proteomics">
        <title>Comparative large-scale characterisation of plant vs. mammal proteins reveals similar and idiosyncratic N-alpha acetylation features.</title>
        <authorList>
            <person name="Bienvenut W.V."/>
            <person name="Sumpton D."/>
            <person name="Martinez A."/>
            <person name="Lilla S."/>
            <person name="Espagne C."/>
            <person name="Meinnel T."/>
            <person name="Giglione C."/>
        </authorList>
    </citation>
    <scope>ACETYLATION [LARGE SCALE ANALYSIS] AT SER-2</scope>
    <scope>CLEAVAGE OF INITIATOR METHIONINE [LARGE SCALE ANALYSIS]</scope>
    <scope>IDENTIFICATION BY MASS SPECTROMETRY [LARGE SCALE ANALYSIS]</scope>
</reference>
<reference key="16">
    <citation type="journal article" date="2013" name="BMC Biochem.">
        <title>Functional redundancy between trans-Golgi network SNARE family members in Arabidopsis thaliana.</title>
        <authorList>
            <person name="Kim S.-J."/>
            <person name="Bassham D.C."/>
        </authorList>
    </citation>
    <scope>FUNCTION</scope>
</reference>
<reference key="17">
    <citation type="journal article" date="2017" name="Plant Physiol.">
        <title>SCYL2 genes are involved in clathrin-mediated vesicle trafficking and essential for plant growth.</title>
        <authorList>
            <person name="Jung J.-Y."/>
            <person name="Lee D.W."/>
            <person name="Ryu S.B."/>
            <person name="Hwang I."/>
            <person name="Schachtman D.P."/>
        </authorList>
    </citation>
    <scope>INTERACTION WITH SCYL2B</scope>
    <source>
        <strain>cv. Columbia</strain>
    </source>
</reference>
<proteinExistence type="evidence at protein level"/>
<evidence type="ECO:0000250" key="1"/>
<evidence type="ECO:0000255" key="2"/>
<evidence type="ECO:0000269" key="3">
    <source>
    </source>
</evidence>
<evidence type="ECO:0000269" key="4">
    <source>
    </source>
</evidence>
<evidence type="ECO:0000269" key="5">
    <source>
    </source>
</evidence>
<evidence type="ECO:0000269" key="6">
    <source>
    </source>
</evidence>
<evidence type="ECO:0000269" key="7">
    <source>
    </source>
</evidence>
<evidence type="ECO:0000269" key="8">
    <source>
    </source>
</evidence>
<evidence type="ECO:0000269" key="9">
    <source>
    </source>
</evidence>
<evidence type="ECO:0000269" key="10">
    <source>
    </source>
</evidence>
<evidence type="ECO:0000269" key="11">
    <source>
    </source>
</evidence>
<evidence type="ECO:0000269" key="12">
    <source>
    </source>
</evidence>
<evidence type="ECO:0000269" key="13">
    <source>
    </source>
</evidence>
<evidence type="ECO:0000303" key="14">
    <source>
    </source>
</evidence>
<evidence type="ECO:0000303" key="15">
    <source>
    </source>
</evidence>
<evidence type="ECO:0000303" key="16">
    <source>
    </source>
</evidence>
<evidence type="ECO:0000303" key="17">
    <source>
    </source>
</evidence>
<evidence type="ECO:0000305" key="18"/>
<evidence type="ECO:0000312" key="19">
    <source>
        <dbReference type="Araport" id="AT5G39510"/>
    </source>
</evidence>
<evidence type="ECO:0000312" key="20">
    <source>
        <dbReference type="EMBL" id="BAB11026.1"/>
    </source>
</evidence>
<evidence type="ECO:0007744" key="21">
    <source>
    </source>
</evidence>
<accession>Q9SEL6</accession>
<accession>Q9FLY4</accession>
<name>VTI11_ARATH</name>
<organism>
    <name type="scientific">Arabidopsis thaliana</name>
    <name type="common">Mouse-ear cress</name>
    <dbReference type="NCBI Taxonomy" id="3702"/>
    <lineage>
        <taxon>Eukaryota</taxon>
        <taxon>Viridiplantae</taxon>
        <taxon>Streptophyta</taxon>
        <taxon>Embryophyta</taxon>
        <taxon>Tracheophyta</taxon>
        <taxon>Spermatophyta</taxon>
        <taxon>Magnoliopsida</taxon>
        <taxon>eudicotyledons</taxon>
        <taxon>Gunneridae</taxon>
        <taxon>Pentapetalae</taxon>
        <taxon>rosids</taxon>
        <taxon>malvids</taxon>
        <taxon>Brassicales</taxon>
        <taxon>Brassicaceae</taxon>
        <taxon>Camelineae</taxon>
        <taxon>Arabidopsis</taxon>
    </lineage>
</organism>
<dbReference type="EMBL" id="AF114750">
    <property type="protein sequence ID" value="AAF24061.1"/>
    <property type="molecule type" value="mRNA"/>
</dbReference>
<dbReference type="EMBL" id="AB009054">
    <property type="protein sequence ID" value="BAB11026.1"/>
    <property type="molecule type" value="Genomic_DNA"/>
</dbReference>
<dbReference type="EMBL" id="CP002688">
    <property type="protein sequence ID" value="AED94442.1"/>
    <property type="molecule type" value="Genomic_DNA"/>
</dbReference>
<dbReference type="EMBL" id="AY070486">
    <property type="protein sequence ID" value="AAL49951.1"/>
    <property type="molecule type" value="mRNA"/>
</dbReference>
<dbReference type="EMBL" id="AY091707">
    <property type="protein sequence ID" value="AAM10306.1"/>
    <property type="molecule type" value="mRNA"/>
</dbReference>
<dbReference type="RefSeq" id="NP_198767.1">
    <property type="nucleotide sequence ID" value="NM_123313.5"/>
</dbReference>
<dbReference type="SMR" id="Q9SEL6"/>
<dbReference type="BioGRID" id="19198">
    <property type="interactions" value="11"/>
</dbReference>
<dbReference type="FunCoup" id="Q9SEL6">
    <property type="interactions" value="3989"/>
</dbReference>
<dbReference type="IntAct" id="Q9SEL6">
    <property type="interactions" value="12"/>
</dbReference>
<dbReference type="STRING" id="3702.Q9SEL6"/>
<dbReference type="iPTMnet" id="Q9SEL6"/>
<dbReference type="PaxDb" id="3702-AT5G39510.1"/>
<dbReference type="ProteomicsDB" id="242762"/>
<dbReference type="EnsemblPlants" id="AT5G39510.1">
    <property type="protein sequence ID" value="AT5G39510.1"/>
    <property type="gene ID" value="AT5G39510"/>
</dbReference>
<dbReference type="GeneID" id="833947"/>
<dbReference type="Gramene" id="AT5G39510.1">
    <property type="protein sequence ID" value="AT5G39510.1"/>
    <property type="gene ID" value="AT5G39510"/>
</dbReference>
<dbReference type="KEGG" id="ath:AT5G39510"/>
<dbReference type="Araport" id="AT5G39510"/>
<dbReference type="TAIR" id="AT5G39510">
    <property type="gene designation" value="SGR4"/>
</dbReference>
<dbReference type="eggNOG" id="KOG1666">
    <property type="taxonomic scope" value="Eukaryota"/>
</dbReference>
<dbReference type="HOGENOM" id="CLU_075474_3_0_1"/>
<dbReference type="InParanoid" id="Q9SEL6"/>
<dbReference type="OMA" id="MEYEAND"/>
<dbReference type="PhylomeDB" id="Q9SEL6"/>
<dbReference type="PRO" id="PR:Q9SEL6"/>
<dbReference type="Proteomes" id="UP000006548">
    <property type="component" value="Chromosome 5"/>
</dbReference>
<dbReference type="ExpressionAtlas" id="Q9SEL6">
    <property type="expression patterns" value="baseline and differential"/>
</dbReference>
<dbReference type="GO" id="GO:0043657">
    <property type="term" value="C:host cell"/>
    <property type="evidence" value="ECO:0007669"/>
    <property type="project" value="GOC"/>
</dbReference>
<dbReference type="GO" id="GO:0005770">
    <property type="term" value="C:late endosome"/>
    <property type="evidence" value="ECO:0000314"/>
    <property type="project" value="TAIR"/>
</dbReference>
<dbReference type="GO" id="GO:0000325">
    <property type="term" value="C:plant-type vacuole"/>
    <property type="evidence" value="ECO:0007005"/>
    <property type="project" value="TAIR"/>
</dbReference>
<dbReference type="GO" id="GO:0009536">
    <property type="term" value="C:plastid"/>
    <property type="evidence" value="ECO:0007005"/>
    <property type="project" value="TAIR"/>
</dbReference>
<dbReference type="GO" id="GO:0005802">
    <property type="term" value="C:trans-Golgi network"/>
    <property type="evidence" value="ECO:0000314"/>
    <property type="project" value="TAIR"/>
</dbReference>
<dbReference type="GO" id="GO:0005774">
    <property type="term" value="C:vacuolar membrane"/>
    <property type="evidence" value="ECO:0007005"/>
    <property type="project" value="TAIR"/>
</dbReference>
<dbReference type="GO" id="GO:0005773">
    <property type="term" value="C:vacuole"/>
    <property type="evidence" value="ECO:0007005"/>
    <property type="project" value="TAIR"/>
</dbReference>
<dbReference type="GO" id="GO:0005484">
    <property type="term" value="F:SNAP receptor activity"/>
    <property type="evidence" value="ECO:0007669"/>
    <property type="project" value="InterPro"/>
</dbReference>
<dbReference type="GO" id="GO:0009630">
    <property type="term" value="P:gravitropism"/>
    <property type="evidence" value="ECO:0000315"/>
    <property type="project" value="TAIR"/>
</dbReference>
<dbReference type="GO" id="GO:0075733">
    <property type="term" value="P:intracellular transport of virus"/>
    <property type="evidence" value="ECO:0000315"/>
    <property type="project" value="TAIR"/>
</dbReference>
<dbReference type="GO" id="GO:0080171">
    <property type="term" value="P:lytic vacuole organization"/>
    <property type="evidence" value="ECO:0000315"/>
    <property type="project" value="UniProtKB"/>
</dbReference>
<dbReference type="GO" id="GO:0006623">
    <property type="term" value="P:protein targeting to vacuole"/>
    <property type="evidence" value="ECO:0000315"/>
    <property type="project" value="TAIR"/>
</dbReference>
<dbReference type="GO" id="GO:0006906">
    <property type="term" value="P:vesicle fusion"/>
    <property type="evidence" value="ECO:0000314"/>
    <property type="project" value="UniProtKB"/>
</dbReference>
<dbReference type="CDD" id="cd15862">
    <property type="entry name" value="SNARE_Vti1"/>
    <property type="match status" value="1"/>
</dbReference>
<dbReference type="FunFam" id="1.20.58.400:FF:000001">
    <property type="entry name" value="Vesicle transport through interaction with t-SNAREs homolog 1A"/>
    <property type="match status" value="1"/>
</dbReference>
<dbReference type="FunFam" id="1.20.5.110:FF:000002">
    <property type="entry name" value="Vesicle transport through interaction with t-SNAREsB"/>
    <property type="match status" value="1"/>
</dbReference>
<dbReference type="Gene3D" id="1.20.5.110">
    <property type="match status" value="1"/>
</dbReference>
<dbReference type="Gene3D" id="1.20.58.400">
    <property type="entry name" value="t-snare proteins"/>
    <property type="match status" value="1"/>
</dbReference>
<dbReference type="InterPro" id="IPR027027">
    <property type="entry name" value="GOSR2/Membrin/Bos1"/>
</dbReference>
<dbReference type="InterPro" id="IPR010989">
    <property type="entry name" value="SNARE"/>
</dbReference>
<dbReference type="InterPro" id="IPR038407">
    <property type="entry name" value="v-SNARE_N_sf"/>
</dbReference>
<dbReference type="InterPro" id="IPR007705">
    <property type="entry name" value="Vesicle_trsprt_v-SNARE_N"/>
</dbReference>
<dbReference type="PANTHER" id="PTHR21230:SF67">
    <property type="entry name" value="VESICLE TRANSPORT V-SNARE 11-RELATED"/>
    <property type="match status" value="1"/>
</dbReference>
<dbReference type="PANTHER" id="PTHR21230">
    <property type="entry name" value="VESICLE TRANSPORT V-SNARE PROTEIN VTI1-RELATED"/>
    <property type="match status" value="1"/>
</dbReference>
<dbReference type="Pfam" id="PF05008">
    <property type="entry name" value="V-SNARE"/>
    <property type="match status" value="1"/>
</dbReference>
<dbReference type="Pfam" id="PF12352">
    <property type="entry name" value="V-SNARE_C"/>
    <property type="match status" value="1"/>
</dbReference>
<dbReference type="PIRSF" id="PIRSF028865">
    <property type="entry name" value="Membrin-2"/>
    <property type="match status" value="1"/>
</dbReference>
<dbReference type="SUPFAM" id="SSF58038">
    <property type="entry name" value="SNARE fusion complex"/>
    <property type="match status" value="1"/>
</dbReference>
<dbReference type="SUPFAM" id="SSF47661">
    <property type="entry name" value="t-snare proteins"/>
    <property type="match status" value="1"/>
</dbReference>
<comment type="function">
    <text evidence="1 3 4 5 7 9 10 11 13">Functions as a v-SNARE responsible for targeting AtELP-containing vesicles from the trans-Golgi network (TGN) to the prevacuolar compartment (PVC) and mediates liposome fusion (PubMed:10397763, PubMed:24021022). May be also involved in retrograde traffic to the cis-Golgi (By similarity). Promotes the formation of vacuolar membrane 'bulbs' (PubMed:21645145). Necessary to deliver proteins to the lytic vacuole, but seems not involved in storage proteins transport (PubMed:17360696). Required for amyloplast sedimentation in the endodermis during shoot gravitropism, which are thus acting as statoliths (PubMed:11826298, PubMed:15797025). Expression in the endodermis is essential for the shoot gravitropic response, whereas expression in other tissues may be responsible for the correct stem and leaf shape (PubMed:11826297, PubMed:15797025, PubMed:9210330).</text>
</comment>
<comment type="subunit">
    <text evidence="7 12">Forms SNARE complexes with the t-SNAREs SYP51 and either SYP21 or SYP22 in the PVC, and with a much lower affinity with SYP61 in the TGN (PubMed:15797025). Does not interact with SYP41, SYP42 or VPS45. Binds to EPSIN1. Interacts with SCYL2B (PubMed:28751315).</text>
</comment>
<comment type="interaction">
    <interactant intactId="EBI-1162795">
        <id>Q9SEL6</id>
    </interactant>
    <interactant intactId="EBI-1162785">
        <id>Q8VY07</id>
        <label>EPSIN1</label>
    </interactant>
    <organismsDiffer>false</organismsDiffer>
    <experiments>3</experiments>
</comment>
<comment type="interaction">
    <interactant intactId="EBI-1162795">
        <id>Q9SEL6</id>
    </interactant>
    <interactant intactId="EBI-2352544">
        <id>Q39233</id>
        <label>SYP21</label>
    </interactant>
    <organismsDiffer>false</organismsDiffer>
    <experiments>4</experiments>
</comment>
<comment type="interaction">
    <interactant intactId="EBI-1162795">
        <id>Q9SEL6</id>
    </interactant>
    <interactant intactId="EBI-2352632">
        <id>P93654</id>
        <label>SYP22</label>
    </interactant>
    <organismsDiffer>false</organismsDiffer>
    <experiments>3</experiments>
</comment>
<comment type="subcellular location">
    <subcellularLocation>
        <location evidence="3 6 7">Golgi apparatus</location>
        <location evidence="3 6 7">trans-Golgi network membrane</location>
        <topology evidence="2">Single-pass type IV membrane protein</topology>
    </subcellularLocation>
    <subcellularLocation>
        <location evidence="3 6 7">Prevacuolar compartment membrane</location>
        <topology evidence="2">Single-pass type IV membrane protein</topology>
    </subcellularLocation>
    <subcellularLocation>
        <location evidence="6 7 8">Vacuole membrane</location>
        <topology evidence="2">Single-pass type IV membrane protein</topology>
    </subcellularLocation>
</comment>
<comment type="tissue specificity">
    <text evidence="3 6">Expressed in roots, stems, flowers and leaves.</text>
</comment>
<comment type="disruption phenotype">
    <text evidence="4 5 7 9 10 13">Abnormal amyloplast sedimentation and gravitropism in both inflorescence stems and hypocotyls with elongated stems in a zigzag fashion, due to narrower angles in internodes mediated by aberrant cell shapes (PubMed:11826297, PubMed:11826298, PubMed:15797025, PubMed:9210330). Reduced formation of vacuolar membrane 'bulbs' (PubMed:21645145). Altered transport of proteins to the lytic vacuole (PubMed:17360696). Small and wrinkled rosette leaves. Fragmentation and vesiculation of vacuoles mostly in cortex cells of the inflorescence stem in comparison to endodermal cells.</text>
</comment>
<comment type="similarity">
    <text evidence="18">Belongs to the VTI1 family.</text>
</comment>
<sequence>MSDVFDGYERQYCELSASLSKKCSSAISLDGEQKKQKLSEIKSGLENAEVLIRKMDLEARTLPPNLKSSLLVKLREFKSDLNNFKTEVKRITSGQLNAAARDELLEAGMADTKTASADQRARLMMSTERLGRTTDRVKDSRRTMMETEEIGVSILQDLHGQRQSLLRAHETLHGVDDNIGKSKKILTDMTRRMNKNKWTIGAIIIALIAAIFIILYFKLTK</sequence>
<feature type="initiator methionine" description="Removed" evidence="21">
    <location>
        <position position="1"/>
    </location>
</feature>
<feature type="chain" id="PRO_0000218233" description="Vesicle transport v-SNARE 11">
    <location>
        <begin position="2"/>
        <end position="221"/>
    </location>
</feature>
<feature type="topological domain" description="Cytoplasmic" evidence="2">
    <location>
        <begin position="2"/>
        <end position="198"/>
    </location>
</feature>
<feature type="transmembrane region" description="Helical; Anchor for type IV membrane protein" evidence="2">
    <location>
        <begin position="199"/>
        <end position="219"/>
    </location>
</feature>
<feature type="topological domain" description="Vesicular" evidence="2">
    <location>
        <begin position="220"/>
        <end position="221"/>
    </location>
</feature>
<feature type="coiled-coil region" evidence="2">
    <location>
        <begin position="32"/>
        <end position="93"/>
    </location>
</feature>
<feature type="modified residue" description="N-acetylserine" evidence="21">
    <location>
        <position position="2"/>
    </location>
</feature>
<feature type="mutagenesis site" description="In zig-3; retarded response to gravity." evidence="4">
    <original>G</original>
    <variation>D</variation>
    <location>
        <position position="151"/>
    </location>
</feature>
<feature type="sequence conflict" description="In Ref. 1; AAF24061." evidence="18" ref="1">
    <original>V</original>
    <variation>A</variation>
    <location>
        <position position="4"/>
    </location>
</feature>
<gene>
    <name evidence="15" type="primary">VTI11</name>
    <name evidence="17" type="synonym">SGR4</name>
    <name evidence="14" type="synonym">VTI1A</name>
    <name evidence="16" type="synonym">ZIG</name>
    <name evidence="16" type="synonym">ZIG1</name>
    <name evidence="19" type="ordered locus">At5g39510</name>
    <name evidence="20" type="ORF">MUL8.21</name>
</gene>